<name>MINC_YERPN</name>
<evidence type="ECO:0000255" key="1">
    <source>
        <dbReference type="HAMAP-Rule" id="MF_00267"/>
    </source>
</evidence>
<sequence length="228" mass="24546">MSQSPIELKGSSFTLSVVHLHDSRPEVIRQALQEKVDQAPAFLKNAPVVINVATLPNGANWKDLQQAVTSAGLRIVGISGCQDERQKRAIARAGLPLLSEGKGQKLAPEPVISPPENVPTQTRIINTPVRSGQQIYARNCDLIVISSVSAGAELIADGNIHIYGMMRGRALAGASGDAKCQIFCTHLGAELVSIAGQYWLSDQIPLEYFGQAARLYLQDNTLTIQPLN</sequence>
<reference key="1">
    <citation type="journal article" date="2006" name="J. Bacteriol.">
        <title>Complete genome sequence of Yersinia pestis strains Antiqua and Nepal516: evidence of gene reduction in an emerging pathogen.</title>
        <authorList>
            <person name="Chain P.S.G."/>
            <person name="Hu P."/>
            <person name="Malfatti S.A."/>
            <person name="Radnedge L."/>
            <person name="Larimer F."/>
            <person name="Vergez L.M."/>
            <person name="Worsham P."/>
            <person name="Chu M.C."/>
            <person name="Andersen G.L."/>
        </authorList>
    </citation>
    <scope>NUCLEOTIDE SEQUENCE [LARGE SCALE GENOMIC DNA]</scope>
    <source>
        <strain>Nepal516</strain>
    </source>
</reference>
<reference key="2">
    <citation type="submission" date="2009-04" db="EMBL/GenBank/DDBJ databases">
        <title>Yersinia pestis Nepal516A whole genome shotgun sequencing project.</title>
        <authorList>
            <person name="Plunkett G. III"/>
            <person name="Anderson B.D."/>
            <person name="Baumler D.J."/>
            <person name="Burland V."/>
            <person name="Cabot E.L."/>
            <person name="Glasner J.D."/>
            <person name="Mau B."/>
            <person name="Neeno-Eckwall E."/>
            <person name="Perna N.T."/>
            <person name="Munk A.C."/>
            <person name="Tapia R."/>
            <person name="Green L.D."/>
            <person name="Rogers Y.C."/>
            <person name="Detter J.C."/>
            <person name="Bruce D.C."/>
            <person name="Brettin T.S."/>
        </authorList>
    </citation>
    <scope>NUCLEOTIDE SEQUENCE [LARGE SCALE GENOMIC DNA]</scope>
    <source>
        <strain>Nepal516</strain>
    </source>
</reference>
<feature type="chain" id="PRO_1000047879" description="Probable septum site-determining protein MinC">
    <location>
        <begin position="1"/>
        <end position="228"/>
    </location>
</feature>
<keyword id="KW-0131">Cell cycle</keyword>
<keyword id="KW-0132">Cell division</keyword>
<keyword id="KW-0717">Septation</keyword>
<gene>
    <name evidence="1" type="primary">minC</name>
    <name type="ordered locus">YPN_1555</name>
    <name type="ORF">YP516_1728</name>
</gene>
<dbReference type="EMBL" id="CP000305">
    <property type="protein sequence ID" value="ABG17885.1"/>
    <property type="molecule type" value="Genomic_DNA"/>
</dbReference>
<dbReference type="EMBL" id="ACNQ01000009">
    <property type="protein sequence ID" value="EEO76996.1"/>
    <property type="molecule type" value="Genomic_DNA"/>
</dbReference>
<dbReference type="RefSeq" id="WP_002220631.1">
    <property type="nucleotide sequence ID" value="NZ_ACNQ01000009.1"/>
</dbReference>
<dbReference type="SMR" id="Q1CJE5"/>
<dbReference type="GeneID" id="96665552"/>
<dbReference type="KEGG" id="ypn:YPN_1555"/>
<dbReference type="HOGENOM" id="CLU_067812_0_1_6"/>
<dbReference type="Proteomes" id="UP000008936">
    <property type="component" value="Chromosome"/>
</dbReference>
<dbReference type="GO" id="GO:0000902">
    <property type="term" value="P:cell morphogenesis"/>
    <property type="evidence" value="ECO:0007669"/>
    <property type="project" value="InterPro"/>
</dbReference>
<dbReference type="GO" id="GO:0000917">
    <property type="term" value="P:division septum assembly"/>
    <property type="evidence" value="ECO:0007669"/>
    <property type="project" value="UniProtKB-KW"/>
</dbReference>
<dbReference type="GO" id="GO:0051302">
    <property type="term" value="P:regulation of cell division"/>
    <property type="evidence" value="ECO:0007669"/>
    <property type="project" value="InterPro"/>
</dbReference>
<dbReference type="GO" id="GO:1901891">
    <property type="term" value="P:regulation of cell septum assembly"/>
    <property type="evidence" value="ECO:0007669"/>
    <property type="project" value="InterPro"/>
</dbReference>
<dbReference type="FunFam" id="2.160.20.70:FF:000002">
    <property type="entry name" value="Probable septum site-determining protein MinC"/>
    <property type="match status" value="1"/>
</dbReference>
<dbReference type="Gene3D" id="2.160.20.70">
    <property type="match status" value="1"/>
</dbReference>
<dbReference type="Gene3D" id="3.30.70.260">
    <property type="match status" value="1"/>
</dbReference>
<dbReference type="HAMAP" id="MF_00267">
    <property type="entry name" value="MinC"/>
    <property type="match status" value="1"/>
</dbReference>
<dbReference type="InterPro" id="IPR016098">
    <property type="entry name" value="CAP/MinC_C"/>
</dbReference>
<dbReference type="InterPro" id="IPR013033">
    <property type="entry name" value="MinC"/>
</dbReference>
<dbReference type="InterPro" id="IPR036145">
    <property type="entry name" value="MinC_C_sf"/>
</dbReference>
<dbReference type="InterPro" id="IPR007874">
    <property type="entry name" value="MinC_N"/>
</dbReference>
<dbReference type="InterPro" id="IPR005526">
    <property type="entry name" value="Septum_form_inhib_MinC_C"/>
</dbReference>
<dbReference type="NCBIfam" id="TIGR01222">
    <property type="entry name" value="minC"/>
    <property type="match status" value="1"/>
</dbReference>
<dbReference type="PANTHER" id="PTHR34108">
    <property type="entry name" value="SEPTUM SITE-DETERMINING PROTEIN MINC"/>
    <property type="match status" value="1"/>
</dbReference>
<dbReference type="PANTHER" id="PTHR34108:SF1">
    <property type="entry name" value="SEPTUM SITE-DETERMINING PROTEIN MINC"/>
    <property type="match status" value="1"/>
</dbReference>
<dbReference type="Pfam" id="PF03775">
    <property type="entry name" value="MinC_C"/>
    <property type="match status" value="1"/>
</dbReference>
<dbReference type="Pfam" id="PF05209">
    <property type="entry name" value="MinC_N"/>
    <property type="match status" value="1"/>
</dbReference>
<dbReference type="SUPFAM" id="SSF63848">
    <property type="entry name" value="Cell-division inhibitor MinC, C-terminal domain"/>
    <property type="match status" value="1"/>
</dbReference>
<organism>
    <name type="scientific">Yersinia pestis bv. Antiqua (strain Nepal516)</name>
    <dbReference type="NCBI Taxonomy" id="377628"/>
    <lineage>
        <taxon>Bacteria</taxon>
        <taxon>Pseudomonadati</taxon>
        <taxon>Pseudomonadota</taxon>
        <taxon>Gammaproteobacteria</taxon>
        <taxon>Enterobacterales</taxon>
        <taxon>Yersiniaceae</taxon>
        <taxon>Yersinia</taxon>
    </lineage>
</organism>
<accession>Q1CJE5</accession>
<accession>C4GSI6</accession>
<comment type="function">
    <text evidence="1">Cell division inhibitor that blocks the formation of polar Z ring septums. Rapidly oscillates between the poles of the cell to destabilize FtsZ filaments that have formed before they mature into polar Z rings. Prevents FtsZ polymerization.</text>
</comment>
<comment type="subunit">
    <text evidence="1">Interacts with MinD and FtsZ.</text>
</comment>
<comment type="similarity">
    <text evidence="1">Belongs to the MinC family.</text>
</comment>
<protein>
    <recommendedName>
        <fullName evidence="1">Probable septum site-determining protein MinC</fullName>
    </recommendedName>
</protein>
<proteinExistence type="inferred from homology"/>